<feature type="chain" id="PRO_0000059151" description="Probable N-acetylgalactosaminyltransferase 8">
    <location>
        <begin position="1"/>
        <end position="421"/>
    </location>
</feature>
<feature type="topological domain" description="Cytoplasmic" evidence="2">
    <location>
        <begin position="1"/>
        <end position="3"/>
    </location>
</feature>
<feature type="transmembrane region" description="Helical; Signal-anchor for type II membrane protein" evidence="2">
    <location>
        <begin position="4"/>
        <end position="24"/>
    </location>
</feature>
<feature type="topological domain" description="Lumenal" evidence="2">
    <location>
        <begin position="25"/>
        <end position="421"/>
    </location>
</feature>
<feature type="region of interest" description="Catalytic subdomain A">
    <location>
        <begin position="106"/>
        <end position="219"/>
    </location>
</feature>
<feature type="region of interest" description="Catalytic subdomain B">
    <location>
        <begin position="277"/>
        <end position="339"/>
    </location>
</feature>
<feature type="short sequence motif" description="Prevents secretion from ER" evidence="3">
    <location>
        <begin position="418"/>
        <end position="421"/>
    </location>
</feature>
<feature type="binding site" evidence="1">
    <location>
        <position position="147"/>
    </location>
    <ligand>
        <name>substrate</name>
    </ligand>
</feature>
<feature type="binding site" evidence="1">
    <location>
        <position position="180"/>
    </location>
    <ligand>
        <name>substrate</name>
    </ligand>
</feature>
<feature type="binding site" evidence="1">
    <location>
        <position position="203"/>
    </location>
    <ligand>
        <name>Mn(2+)</name>
        <dbReference type="ChEBI" id="CHEBI:29035"/>
    </ligand>
</feature>
<feature type="binding site" evidence="1">
    <location>
        <position position="204"/>
    </location>
    <ligand>
        <name>substrate</name>
    </ligand>
</feature>
<feature type="binding site" evidence="1">
    <location>
        <position position="205"/>
    </location>
    <ligand>
        <name>Mn(2+)</name>
        <dbReference type="ChEBI" id="CHEBI:29035"/>
    </ligand>
</feature>
<feature type="binding site" evidence="1">
    <location>
        <position position="308"/>
    </location>
    <ligand>
        <name>substrate</name>
    </ligand>
</feature>
<feature type="binding site" evidence="1">
    <location>
        <position position="336"/>
    </location>
    <ligand>
        <name>Mn(2+)</name>
        <dbReference type="ChEBI" id="CHEBI:29035"/>
    </ligand>
</feature>
<feature type="binding site" evidence="1">
    <location>
        <position position="339"/>
    </location>
    <ligand>
        <name>substrate</name>
    </ligand>
</feature>
<feature type="binding site" evidence="1">
    <location>
        <position position="344"/>
    </location>
    <ligand>
        <name>substrate</name>
    </ligand>
</feature>
<feature type="glycosylation site" description="N-linked (GlcNAc...) asparagine" evidence="4">
    <location>
        <position position="52"/>
    </location>
</feature>
<feature type="glycosylation site" description="N-linked (GlcNAc...) asparagine" evidence="4">
    <location>
        <position position="58"/>
    </location>
</feature>
<feature type="disulfide bond" evidence="1">
    <location>
        <begin position="98"/>
        <end position="331"/>
    </location>
</feature>
<feature type="disulfide bond" evidence="1">
    <location>
        <begin position="322"/>
        <end position="399"/>
    </location>
</feature>
<organism>
    <name type="scientific">Caenorhabditis elegans</name>
    <dbReference type="NCBI Taxonomy" id="6239"/>
    <lineage>
        <taxon>Eukaryota</taxon>
        <taxon>Metazoa</taxon>
        <taxon>Ecdysozoa</taxon>
        <taxon>Nematoda</taxon>
        <taxon>Chromadorea</taxon>
        <taxon>Rhabditida</taxon>
        <taxon>Rhabditina</taxon>
        <taxon>Rhabditomorpha</taxon>
        <taxon>Rhabditoidea</taxon>
        <taxon>Rhabditidae</taxon>
        <taxon>Peloderinae</taxon>
        <taxon>Caenorhabditis</taxon>
    </lineage>
</organism>
<dbReference type="EC" id="2.4.1.-"/>
<dbReference type="EMBL" id="AF031842">
    <property type="protein sequence ID" value="AAC13678.1"/>
    <property type="molecule type" value="mRNA"/>
</dbReference>
<dbReference type="EMBL" id="AL590342">
    <property type="protein sequence ID" value="CAC35860.1"/>
    <property type="molecule type" value="Genomic_DNA"/>
</dbReference>
<dbReference type="PIR" id="T42252">
    <property type="entry name" value="T42252"/>
</dbReference>
<dbReference type="RefSeq" id="NP_001366981.1">
    <property type="nucleotide sequence ID" value="NM_001379936.3"/>
</dbReference>
<dbReference type="RefSeq" id="NP_499504.1">
    <property type="nucleotide sequence ID" value="NM_067103.4"/>
</dbReference>
<dbReference type="SMR" id="O45293"/>
<dbReference type="BioGRID" id="41776">
    <property type="interactions" value="9"/>
</dbReference>
<dbReference type="DIP" id="DIP-24790N"/>
<dbReference type="FunCoup" id="O45293">
    <property type="interactions" value="7"/>
</dbReference>
<dbReference type="STRING" id="6239.Y66A7A.6.2"/>
<dbReference type="CAZy" id="GT27">
    <property type="family name" value="Glycosyltransferase Family 27"/>
</dbReference>
<dbReference type="GlyCosmos" id="O45293">
    <property type="glycosylation" value="2 sites, No reported glycans"/>
</dbReference>
<dbReference type="iPTMnet" id="O45293"/>
<dbReference type="PaxDb" id="6239-Y66A7A.6.2"/>
<dbReference type="PeptideAtlas" id="O45293"/>
<dbReference type="EnsemblMetazoa" id="Y66A7A.6.1">
    <property type="protein sequence ID" value="Y66A7A.6.1"/>
    <property type="gene ID" value="WBGene00001633"/>
</dbReference>
<dbReference type="GeneID" id="176595"/>
<dbReference type="UCSC" id="Y66A7A.6.1">
    <property type="organism name" value="c. elegans"/>
</dbReference>
<dbReference type="AGR" id="WB:WBGene00001633"/>
<dbReference type="WormBase" id="Y66A7A.6">
    <property type="protein sequence ID" value="CE15691"/>
    <property type="gene ID" value="WBGene00001633"/>
    <property type="gene designation" value="gly-8"/>
</dbReference>
<dbReference type="eggNOG" id="KOG3736">
    <property type="taxonomic scope" value="Eukaryota"/>
</dbReference>
<dbReference type="HOGENOM" id="CLU_013477_0_0_1"/>
<dbReference type="InParanoid" id="O45293"/>
<dbReference type="OMA" id="DMGMEIW"/>
<dbReference type="OrthoDB" id="6119243at2759"/>
<dbReference type="PhylomeDB" id="O45293"/>
<dbReference type="Reactome" id="R-CEL-913709">
    <property type="pathway name" value="O-linked glycosylation of mucins"/>
</dbReference>
<dbReference type="UniPathway" id="UPA00378"/>
<dbReference type="PRO" id="PR:O45293"/>
<dbReference type="Proteomes" id="UP000001940">
    <property type="component" value="Chromosome III"/>
</dbReference>
<dbReference type="Bgee" id="WBGene00001633">
    <property type="expression patterns" value="Expressed in larva and 4 other cell types or tissues"/>
</dbReference>
<dbReference type="GO" id="GO:0005794">
    <property type="term" value="C:Golgi apparatus"/>
    <property type="evidence" value="ECO:0000318"/>
    <property type="project" value="GO_Central"/>
</dbReference>
<dbReference type="GO" id="GO:0000139">
    <property type="term" value="C:Golgi membrane"/>
    <property type="evidence" value="ECO:0007669"/>
    <property type="project" value="UniProtKB-SubCell"/>
</dbReference>
<dbReference type="GO" id="GO:0046872">
    <property type="term" value="F:metal ion binding"/>
    <property type="evidence" value="ECO:0007669"/>
    <property type="project" value="UniProtKB-KW"/>
</dbReference>
<dbReference type="GO" id="GO:0005112">
    <property type="term" value="F:Notch binding"/>
    <property type="evidence" value="ECO:0000318"/>
    <property type="project" value="GO_Central"/>
</dbReference>
<dbReference type="GO" id="GO:0004653">
    <property type="term" value="F:polypeptide N-acetylgalactosaminyltransferase activity"/>
    <property type="evidence" value="ECO:0000318"/>
    <property type="project" value="GO_Central"/>
</dbReference>
<dbReference type="GO" id="GO:0006493">
    <property type="term" value="P:protein O-linked glycosylation"/>
    <property type="evidence" value="ECO:0000318"/>
    <property type="project" value="GO_Central"/>
</dbReference>
<dbReference type="GO" id="GO:0008593">
    <property type="term" value="P:regulation of Notch signaling pathway"/>
    <property type="evidence" value="ECO:0000318"/>
    <property type="project" value="GO_Central"/>
</dbReference>
<dbReference type="CDD" id="cd02510">
    <property type="entry name" value="pp-GalNAc-T"/>
    <property type="match status" value="1"/>
</dbReference>
<dbReference type="FunFam" id="3.90.550.10:FF:000238">
    <property type="entry name" value="Probable N-acetylgalactosaminyltransferase 8"/>
    <property type="match status" value="1"/>
</dbReference>
<dbReference type="Gene3D" id="3.90.550.10">
    <property type="entry name" value="Spore Coat Polysaccharide Biosynthesis Protein SpsA, Chain A"/>
    <property type="match status" value="1"/>
</dbReference>
<dbReference type="InterPro" id="IPR045885">
    <property type="entry name" value="GalNAc-T"/>
</dbReference>
<dbReference type="InterPro" id="IPR001173">
    <property type="entry name" value="Glyco_trans_2-like"/>
</dbReference>
<dbReference type="InterPro" id="IPR029044">
    <property type="entry name" value="Nucleotide-diphossugar_trans"/>
</dbReference>
<dbReference type="PANTHER" id="PTHR11675">
    <property type="entry name" value="N-ACETYLGALACTOSAMINYLTRANSFERASE"/>
    <property type="match status" value="1"/>
</dbReference>
<dbReference type="PANTHER" id="PTHR11675:SF116">
    <property type="entry name" value="N-ACETYLGALACTOSAMINYLTRANSFERASE 8-RELATED"/>
    <property type="match status" value="1"/>
</dbReference>
<dbReference type="Pfam" id="PF00535">
    <property type="entry name" value="Glycos_transf_2"/>
    <property type="match status" value="1"/>
</dbReference>
<dbReference type="SUPFAM" id="SSF53448">
    <property type="entry name" value="Nucleotide-diphospho-sugar transferases"/>
    <property type="match status" value="1"/>
</dbReference>
<dbReference type="PROSITE" id="PS00014">
    <property type="entry name" value="ER_TARGET"/>
    <property type="match status" value="1"/>
</dbReference>
<protein>
    <recommendedName>
        <fullName>Probable N-acetylgalactosaminyltransferase 8</fullName>
        <ecNumber>2.4.1.-</ecNumber>
    </recommendedName>
    <alternativeName>
        <fullName>Protein-UDP acetylgalactosaminyltransferase 8</fullName>
    </alternativeName>
    <alternativeName>
        <fullName>UDP-GalNAc:polypeptide N-acetylgalactosaminyltransferase 8</fullName>
        <shortName>pp-GaNTase 8</shortName>
    </alternativeName>
</protein>
<evidence type="ECO:0000250" key="1"/>
<evidence type="ECO:0000255" key="2"/>
<evidence type="ECO:0000255" key="3">
    <source>
        <dbReference type="PROSITE-ProRule" id="PRU10138"/>
    </source>
</evidence>
<evidence type="ECO:0000269" key="4">
    <source>
    </source>
</evidence>
<evidence type="ECO:0000305" key="5"/>
<gene>
    <name type="primary">gly-8</name>
    <name type="ORF">Y66A7A.6</name>
</gene>
<comment type="function">
    <text evidence="1">Potential glycopeptide transferase involved in O-linked oligosaccharide biosynthesis (By similarity). In contrast to other members of the family, it does not act as a peptide transferase that transfers GalNAc onto serine or threonine residue on peptides that have been tested. Some peptide transferase activity is however not excluded, considering that its appropriate peptide substrate may remain unidentified.</text>
</comment>
<comment type="cofactor">
    <cofactor evidence="1">
        <name>Mn(2+)</name>
        <dbReference type="ChEBI" id="CHEBI:29035"/>
    </cofactor>
</comment>
<comment type="pathway">
    <text>Protein modification; protein glycosylation.</text>
</comment>
<comment type="subcellular location">
    <subcellularLocation>
        <location evidence="1">Golgi apparatus membrane</location>
        <topology evidence="1">Single-pass type II membrane protein</topology>
    </subcellularLocation>
</comment>
<comment type="domain">
    <text evidence="1">There are two conserved domains in the glycosyltransferase region: the N-terminal domain (domain A, also called GT1 motif), which is probably involved in manganese coordination and substrate binding and the C-terminal domain (domain B, also called Gal/GalNAc-T motif), which is probably involved in catalytic reaction and UDP-Gal binding.</text>
</comment>
<comment type="similarity">
    <text evidence="5">Belongs to the glycosyltransferase 2 family. GalNAc-T subfamily.</text>
</comment>
<comment type="caution">
    <text evidence="5">In contrast to other members of the family, it lacks the C-terminal ricin B-type lectin domain, which usually contributes to the glycopeptide specificity. It instead contains a motif that may retain its secretion form the endoplasmic reticulum.</text>
</comment>
<name>GALT8_CAEEL</name>
<proteinExistence type="evidence at protein level"/>
<sequence>MRRHVVLSIFVFAGIVFAAEEAEKLPKCEHVDPYENLEGWLDLKPLTERKCNHTLKENLTEAESKKSEWGIKSFAFDALSSEKLGPNRNVGKQAHKLCEEEKYDASYSTSVVVIHHNEALSTILRMINGIIEFTPKSLLKEIVLYEDASEEDHVLTKHLEKFAKIKGLEDKLIIKRSEYRQGLIRAKVHASRLATGEVIVFMDSHCEVAERWLEPLLQPIKEDPKSIVLPVVDLINPVSFDYSPSMVAKSGFDWGFTFKWIYLPWEYFETPENNVKPFNSPAMPGGLLAMRKEYFVELGEYDMGMEIWGSENIELSLKAWLCGGRVVVAPCSRVGHVFRMRRPYTSKPGMDTALYNAVRVAKTWLGEYESKFFAVKPRGAKMVFGDLTEPMQVKDRLKCKDMKWFIENVYPELEPKVHDEL</sequence>
<keyword id="KW-1015">Disulfide bond</keyword>
<keyword id="KW-0325">Glycoprotein</keyword>
<keyword id="KW-0328">Glycosyltransferase</keyword>
<keyword id="KW-0333">Golgi apparatus</keyword>
<keyword id="KW-0464">Manganese</keyword>
<keyword id="KW-0472">Membrane</keyword>
<keyword id="KW-0479">Metal-binding</keyword>
<keyword id="KW-1185">Reference proteome</keyword>
<keyword id="KW-0735">Signal-anchor</keyword>
<keyword id="KW-0808">Transferase</keyword>
<keyword id="KW-0812">Transmembrane</keyword>
<keyword id="KW-1133">Transmembrane helix</keyword>
<accession>O45293</accession>
<reference key="1">
    <citation type="journal article" date="1998" name="J. Biol. Chem.">
        <title>cDNA cloning and expression of a family of UDP-N-acetyl-D-galactosamine:polypeptide N-acetylgalactosaminyltransferase sequence homologs from Caenorhabditis elegans.</title>
        <authorList>
            <person name="Hagen F.K."/>
            <person name="Nehrke K."/>
        </authorList>
    </citation>
    <scope>NUCLEOTIDE SEQUENCE [MRNA]</scope>
    <source>
        <strain>Bristol N2</strain>
    </source>
</reference>
<reference key="2">
    <citation type="journal article" date="1998" name="Science">
        <title>Genome sequence of the nematode C. elegans: a platform for investigating biology.</title>
        <authorList>
            <consortium name="The C. elegans sequencing consortium"/>
        </authorList>
    </citation>
    <scope>NUCLEOTIDE SEQUENCE [LARGE SCALE GENOMIC DNA]</scope>
    <source>
        <strain>Bristol N2</strain>
    </source>
</reference>
<reference key="3">
    <citation type="journal article" date="2007" name="Mol. Cell. Proteomics">
        <title>Proteomics reveals N-linked glycoprotein diversity in Caenorhabditis elegans and suggests an atypical translocation mechanism for integral membrane proteins.</title>
        <authorList>
            <person name="Kaji H."/>
            <person name="Kamiie J."/>
            <person name="Kawakami H."/>
            <person name="Kido K."/>
            <person name="Yamauchi Y."/>
            <person name="Shinkawa T."/>
            <person name="Taoka M."/>
            <person name="Takahashi N."/>
            <person name="Isobe T."/>
        </authorList>
    </citation>
    <scope>GLYCOSYLATION [LARGE SCALE ANALYSIS] AT ASN-52 AND ASN-58</scope>
    <scope>IDENTIFICATION BY MASS SPECTROMETRY</scope>
    <source>
        <strain>Bristol N2</strain>
    </source>
</reference>